<protein>
    <recommendedName>
        <fullName evidence="2">NAD(P)H-quinone oxidoreductase subunit H, organellar chromatophore</fullName>
        <ecNumber evidence="2">7.1.1.-</ecNumber>
    </recommendedName>
    <alternativeName>
        <fullName>NAD(P)H dehydrogenase subunit H</fullName>
    </alternativeName>
    <alternativeName>
        <fullName evidence="2">NADH-plastoquinone oxidoreductase 49 kDa subunit</fullName>
    </alternativeName>
    <alternativeName>
        <fullName evidence="2">NADH-plastoquinone oxidoreductase subunit H</fullName>
    </alternativeName>
</protein>
<geneLocation type="organellar chromatophore"/>
<proteinExistence type="inferred from homology"/>
<comment type="function">
    <text evidence="2">NDH shuttles electrons from NAD(P)H:plastoquinone, via FMN and iron-sulfur (Fe-S) centers, to quinones in the photosynthetic chain and possibly in a chloroplast respiratory chain. The immediate electron acceptor for the enzyme in this species is believed to be plastoquinone. Couples the redox reaction to proton translocation, and thus conserves the redox energy in a proton gradient.</text>
</comment>
<comment type="catalytic activity">
    <reaction evidence="2">
        <text>a quinone + NADH + H(+) = a quinol + NAD(+)</text>
        <dbReference type="Rhea" id="RHEA:46160"/>
        <dbReference type="ChEBI" id="CHEBI:15378"/>
        <dbReference type="ChEBI" id="CHEBI:24646"/>
        <dbReference type="ChEBI" id="CHEBI:57540"/>
        <dbReference type="ChEBI" id="CHEBI:57945"/>
        <dbReference type="ChEBI" id="CHEBI:132124"/>
    </reaction>
</comment>
<comment type="subunit">
    <text evidence="2">NDH is composed of at least 16 different subunits, 5 of which are encoded in the nucleus.</text>
</comment>
<comment type="subcellular location">
    <subcellularLocation>
        <location evidence="1">Plastid</location>
        <location evidence="1">Organellar chromatophore thylakoid membrane</location>
        <topology evidence="2">Peripheral membrane protein</topology>
        <orientation evidence="2">Stromal side</orientation>
    </subcellularLocation>
</comment>
<comment type="similarity">
    <text evidence="2">Belongs to the complex I 49 kDa subunit family.</text>
</comment>
<accession>B1X4A5</accession>
<sequence length="406" mass="46300">MTQLETRTEPMIINFGPHHPSMHGVLRLVVTLDGEDVVDCEPVIGYLHRGMEKIAESRTAITFVPYVSRWDYAAGMFNEAITVNATEKLMDLEIPRRASYIRVLMLELNRIANHLLWLGPFLADVGAQTPFFYIFREREMIYDLWEAVTGQRLINNNYFRVGGVACDLPFGWLDKCEDFCDWFGPKIDEYEQLITNNPIFRRRIEGLGVISREQAINWSLSGPMLRASGVPWDLRKVDHYECYDDFDWDIAWAKEGDCYARYLVRIEEMRQSLRILKQALKMIPGGPTENLEAQCGFDSTDTNQDLDKKRSVATGEVSGNEYTIGPKKINLNKCPEGELYCRVESGKGELGVFIISNGEANPWRWKIRAADFNNLQILPHILTGAKVADVMAILGSIDVIMGSVDR</sequence>
<organism>
    <name type="scientific">Paulinella chromatophora</name>
    <dbReference type="NCBI Taxonomy" id="39717"/>
    <lineage>
        <taxon>Eukaryota</taxon>
        <taxon>Sar</taxon>
        <taxon>Rhizaria</taxon>
        <taxon>Cercozoa</taxon>
        <taxon>Imbricatea</taxon>
        <taxon>Silicofilosea</taxon>
        <taxon>Euglyphida</taxon>
        <taxon>Paulinellidae</taxon>
        <taxon>Paulinella</taxon>
    </lineage>
</organism>
<feature type="chain" id="PRO_0000371959" description="NAD(P)H-quinone oxidoreductase subunit H, organellar chromatophore">
    <location>
        <begin position="1"/>
        <end position="406"/>
    </location>
</feature>
<evidence type="ECO:0000250" key="1"/>
<evidence type="ECO:0000255" key="2">
    <source>
        <dbReference type="HAMAP-Rule" id="MF_01358"/>
    </source>
</evidence>
<reference key="1">
    <citation type="journal article" date="2008" name="Curr. Biol.">
        <title>Chromatophore genome sequence of Paulinella sheds light on acquisition of photosynthesis by eukaryotes.</title>
        <authorList>
            <person name="Nowack E.C.M."/>
            <person name="Melkonian M."/>
            <person name="Gloeckner G."/>
        </authorList>
    </citation>
    <scope>NUCLEOTIDE SEQUENCE [LARGE SCALE GENOMIC DNA]</scope>
</reference>
<gene>
    <name evidence="2" type="primary">ndhH</name>
    <name type="ordered locus">PCC_0333</name>
</gene>
<keyword id="KW-0472">Membrane</keyword>
<keyword id="KW-0520">NAD</keyword>
<keyword id="KW-0521">NADP</keyword>
<keyword id="KW-0994">Organellar chromatophore</keyword>
<keyword id="KW-0934">Plastid</keyword>
<keyword id="KW-0618">Plastoquinone</keyword>
<keyword id="KW-0874">Quinone</keyword>
<keyword id="KW-0793">Thylakoid</keyword>
<keyword id="KW-1278">Translocase</keyword>
<keyword id="KW-0813">Transport</keyword>
<dbReference type="EC" id="7.1.1.-" evidence="2"/>
<dbReference type="EMBL" id="CP000815">
    <property type="protein sequence ID" value="ACB42774.1"/>
    <property type="molecule type" value="Genomic_DNA"/>
</dbReference>
<dbReference type="RefSeq" id="YP_002048984.1">
    <property type="nucleotide sequence ID" value="NC_011087.1"/>
</dbReference>
<dbReference type="SMR" id="B1X4A5"/>
<dbReference type="GeneID" id="6481295"/>
<dbReference type="GO" id="GO:0070118">
    <property type="term" value="C:organellar chromatophore thylakoid membrane"/>
    <property type="evidence" value="ECO:0007669"/>
    <property type="project" value="UniProtKB-SubCell"/>
</dbReference>
<dbReference type="GO" id="GO:0005886">
    <property type="term" value="C:plasma membrane"/>
    <property type="evidence" value="ECO:0007669"/>
    <property type="project" value="UniProtKB-UniRule"/>
</dbReference>
<dbReference type="GO" id="GO:0009536">
    <property type="term" value="C:plastid"/>
    <property type="evidence" value="ECO:0007669"/>
    <property type="project" value="UniProtKB-KW"/>
</dbReference>
<dbReference type="GO" id="GO:0051287">
    <property type="term" value="F:NAD binding"/>
    <property type="evidence" value="ECO:0007669"/>
    <property type="project" value="InterPro"/>
</dbReference>
<dbReference type="GO" id="GO:0050136">
    <property type="term" value="F:NADH:ubiquinone reductase (non-electrogenic) activity"/>
    <property type="evidence" value="ECO:0007669"/>
    <property type="project" value="UniProtKB-UniRule"/>
</dbReference>
<dbReference type="GO" id="GO:0048038">
    <property type="term" value="F:quinone binding"/>
    <property type="evidence" value="ECO:0007669"/>
    <property type="project" value="UniProtKB-KW"/>
</dbReference>
<dbReference type="Gene3D" id="1.10.645.10">
    <property type="entry name" value="Cytochrome-c3 Hydrogenase, chain B"/>
    <property type="match status" value="1"/>
</dbReference>
<dbReference type="HAMAP" id="MF_01358">
    <property type="entry name" value="NDH1_NuoD"/>
    <property type="match status" value="1"/>
</dbReference>
<dbReference type="InterPro" id="IPR001135">
    <property type="entry name" value="NADH_Q_OxRdtase_suD"/>
</dbReference>
<dbReference type="InterPro" id="IPR014029">
    <property type="entry name" value="NADH_UbQ_OxRdtase_49kDa_CS"/>
</dbReference>
<dbReference type="InterPro" id="IPR022885">
    <property type="entry name" value="NDH1_su_D/H"/>
</dbReference>
<dbReference type="InterPro" id="IPR029014">
    <property type="entry name" value="NiFe-Hase_large"/>
</dbReference>
<dbReference type="NCBIfam" id="TIGR01962">
    <property type="entry name" value="NuoD"/>
    <property type="match status" value="1"/>
</dbReference>
<dbReference type="NCBIfam" id="NF004739">
    <property type="entry name" value="PRK06075.1"/>
    <property type="match status" value="1"/>
</dbReference>
<dbReference type="NCBIfam" id="NF005649">
    <property type="entry name" value="PRK07415.1"/>
    <property type="match status" value="1"/>
</dbReference>
<dbReference type="PANTHER" id="PTHR11993:SF10">
    <property type="entry name" value="NADH DEHYDROGENASE [UBIQUINONE] IRON-SULFUR PROTEIN 2, MITOCHONDRIAL"/>
    <property type="match status" value="1"/>
</dbReference>
<dbReference type="PANTHER" id="PTHR11993">
    <property type="entry name" value="NADH-UBIQUINONE OXIDOREDUCTASE 49 KDA SUBUNIT"/>
    <property type="match status" value="1"/>
</dbReference>
<dbReference type="Pfam" id="PF00346">
    <property type="entry name" value="Complex1_49kDa"/>
    <property type="match status" value="1"/>
</dbReference>
<dbReference type="SUPFAM" id="SSF56762">
    <property type="entry name" value="HydB/Nqo4-like"/>
    <property type="match status" value="1"/>
</dbReference>
<dbReference type="PROSITE" id="PS00535">
    <property type="entry name" value="COMPLEX1_49K"/>
    <property type="match status" value="1"/>
</dbReference>
<name>NDHH_PAUCH</name>